<reference key="1">
    <citation type="journal article" date="1996" name="DNA Res.">
        <title>Sequence analysis of the genome of the unicellular cyanobacterium Synechocystis sp. strain PCC6803. II. Sequence determination of the entire genome and assignment of potential protein-coding regions.</title>
        <authorList>
            <person name="Kaneko T."/>
            <person name="Sato S."/>
            <person name="Kotani H."/>
            <person name="Tanaka A."/>
            <person name="Asamizu E."/>
            <person name="Nakamura Y."/>
            <person name="Miyajima N."/>
            <person name="Hirosawa M."/>
            <person name="Sugiura M."/>
            <person name="Sasamoto S."/>
            <person name="Kimura T."/>
            <person name="Hosouchi T."/>
            <person name="Matsuno A."/>
            <person name="Muraki A."/>
            <person name="Nakazaki N."/>
            <person name="Naruo K."/>
            <person name="Okumura S."/>
            <person name="Shimpo S."/>
            <person name="Takeuchi C."/>
            <person name="Wada T."/>
            <person name="Watanabe A."/>
            <person name="Yamada M."/>
            <person name="Yasuda M."/>
            <person name="Tabata S."/>
        </authorList>
    </citation>
    <scope>NUCLEOTIDE SEQUENCE [LARGE SCALE GENOMIC DNA]</scope>
    <source>
        <strain>ATCC 27184 / PCC 6803 / Kazusa</strain>
    </source>
</reference>
<name>Y1118_SYNY3</name>
<feature type="chain" id="PRO_0000138484" description="UPF0145 protein sll118">
    <location>
        <begin position="1"/>
        <end position="108"/>
    </location>
</feature>
<gene>
    <name type="ordered locus">sll1118</name>
</gene>
<sequence length="108" mass="11450">MLTSTTDIVQGRTIARYHGIVTAEVVYGTNALRDFFAGIRDLIGGRTGSYEQIFEKGHREAIAELTERAQKLGANGVIGVAVNTGTINIDDRGALLLITATGTAVTVD</sequence>
<accession>P73346</accession>
<dbReference type="EMBL" id="BA000022">
    <property type="protein sequence ID" value="BAA17377.1"/>
    <property type="molecule type" value="Genomic_DNA"/>
</dbReference>
<dbReference type="PIR" id="S77530">
    <property type="entry name" value="S77530"/>
</dbReference>
<dbReference type="SMR" id="P73346"/>
<dbReference type="PaxDb" id="1148-1652455"/>
<dbReference type="EnsemblBacteria" id="BAA17377">
    <property type="protein sequence ID" value="BAA17377"/>
    <property type="gene ID" value="BAA17377"/>
</dbReference>
<dbReference type="KEGG" id="syn:sll1118"/>
<dbReference type="eggNOG" id="COG0393">
    <property type="taxonomic scope" value="Bacteria"/>
</dbReference>
<dbReference type="InParanoid" id="P73346"/>
<dbReference type="PhylomeDB" id="P73346"/>
<dbReference type="Proteomes" id="UP000001425">
    <property type="component" value="Chromosome"/>
</dbReference>
<dbReference type="Gene3D" id="3.30.110.70">
    <property type="entry name" value="Hypothetical protein apc22750. Chain B"/>
    <property type="match status" value="1"/>
</dbReference>
<dbReference type="HAMAP" id="MF_00338">
    <property type="entry name" value="UPF0145"/>
    <property type="match status" value="1"/>
</dbReference>
<dbReference type="InterPro" id="IPR035439">
    <property type="entry name" value="UPF0145_dom_sf"/>
</dbReference>
<dbReference type="InterPro" id="IPR002765">
    <property type="entry name" value="UPF0145_YbjQ-like"/>
</dbReference>
<dbReference type="PANTHER" id="PTHR34068">
    <property type="entry name" value="UPF0145 PROTEIN YBJQ"/>
    <property type="match status" value="1"/>
</dbReference>
<dbReference type="PANTHER" id="PTHR34068:SF1">
    <property type="entry name" value="UPF0145 PROTEIN YBJQ"/>
    <property type="match status" value="1"/>
</dbReference>
<dbReference type="Pfam" id="PF01906">
    <property type="entry name" value="YbjQ_1"/>
    <property type="match status" value="1"/>
</dbReference>
<dbReference type="SUPFAM" id="SSF117782">
    <property type="entry name" value="YbjQ-like"/>
    <property type="match status" value="1"/>
</dbReference>
<comment type="similarity">
    <text evidence="1">Belongs to the UPF0145 family.</text>
</comment>
<protein>
    <recommendedName>
        <fullName>UPF0145 protein sll118</fullName>
    </recommendedName>
</protein>
<evidence type="ECO:0000305" key="1"/>
<organism>
    <name type="scientific">Synechocystis sp. (strain ATCC 27184 / PCC 6803 / Kazusa)</name>
    <dbReference type="NCBI Taxonomy" id="1111708"/>
    <lineage>
        <taxon>Bacteria</taxon>
        <taxon>Bacillati</taxon>
        <taxon>Cyanobacteriota</taxon>
        <taxon>Cyanophyceae</taxon>
        <taxon>Synechococcales</taxon>
        <taxon>Merismopediaceae</taxon>
        <taxon>Synechocystis</taxon>
    </lineage>
</organism>
<proteinExistence type="inferred from homology"/>
<keyword id="KW-1185">Reference proteome</keyword>